<sequence>MRKSFYSWLMTQRNPKSNEPVAILADLVFDDTTFPKHTNDFELISRYLEDQASFSFNLGQFDEIWEDYLAH</sequence>
<proteinExistence type="inferred from homology"/>
<name>Y510_STRP8</name>
<organism>
    <name type="scientific">Streptococcus pyogenes serotype M18 (strain MGAS8232)</name>
    <dbReference type="NCBI Taxonomy" id="186103"/>
    <lineage>
        <taxon>Bacteria</taxon>
        <taxon>Bacillati</taxon>
        <taxon>Bacillota</taxon>
        <taxon>Bacilli</taxon>
        <taxon>Lactobacillales</taxon>
        <taxon>Streptococcaceae</taxon>
        <taxon>Streptococcus</taxon>
    </lineage>
</organism>
<feature type="chain" id="PRO_0000164299" description="UPF0346 protein spyM18_0510">
    <location>
        <begin position="1"/>
        <end position="71"/>
    </location>
</feature>
<gene>
    <name type="ordered locus">spyM18_0510</name>
</gene>
<dbReference type="EMBL" id="AE009949">
    <property type="protein sequence ID" value="AAL97227.1"/>
    <property type="molecule type" value="Genomic_DNA"/>
</dbReference>
<dbReference type="RefSeq" id="WP_002985757.1">
    <property type="nucleotide sequence ID" value="NC_003485.1"/>
</dbReference>
<dbReference type="SMR" id="Q7CNH7"/>
<dbReference type="KEGG" id="spm:spyM18_0510"/>
<dbReference type="HOGENOM" id="CLU_177534_1_0_9"/>
<dbReference type="Gene3D" id="1.10.150.260">
    <property type="entry name" value="YozE SAM-like"/>
    <property type="match status" value="1"/>
</dbReference>
<dbReference type="HAMAP" id="MF_01538">
    <property type="entry name" value="UPF0346"/>
    <property type="match status" value="1"/>
</dbReference>
<dbReference type="InterPro" id="IPR010673">
    <property type="entry name" value="UPF0346"/>
</dbReference>
<dbReference type="InterPro" id="IPR023089">
    <property type="entry name" value="YozE_SAM-like"/>
</dbReference>
<dbReference type="InterPro" id="IPR036806">
    <property type="entry name" value="YozE_SAM-like_sf"/>
</dbReference>
<dbReference type="NCBIfam" id="NF010193">
    <property type="entry name" value="PRK13672.1"/>
    <property type="match status" value="1"/>
</dbReference>
<dbReference type="Pfam" id="PF06855">
    <property type="entry name" value="YozE_SAM_like"/>
    <property type="match status" value="1"/>
</dbReference>
<dbReference type="PIRSF" id="PIRSF037262">
    <property type="entry name" value="UCP037262"/>
    <property type="match status" value="1"/>
</dbReference>
<dbReference type="SUPFAM" id="SSF140652">
    <property type="entry name" value="YozE-like"/>
    <property type="match status" value="1"/>
</dbReference>
<protein>
    <recommendedName>
        <fullName evidence="1">UPF0346 protein spyM18_0510</fullName>
    </recommendedName>
</protein>
<evidence type="ECO:0000255" key="1">
    <source>
        <dbReference type="HAMAP-Rule" id="MF_01538"/>
    </source>
</evidence>
<reference key="1">
    <citation type="journal article" date="2002" name="Proc. Natl. Acad. Sci. U.S.A.">
        <title>Genome sequence and comparative microarray analysis of serotype M18 group A Streptococcus strains associated with acute rheumatic fever outbreaks.</title>
        <authorList>
            <person name="Smoot J.C."/>
            <person name="Barbian K.D."/>
            <person name="Van Gompel J.J."/>
            <person name="Smoot L.M."/>
            <person name="Chaussee M.S."/>
            <person name="Sylva G.L."/>
            <person name="Sturdevant D.E."/>
            <person name="Ricklefs S.M."/>
            <person name="Porcella S.F."/>
            <person name="Parkins L.D."/>
            <person name="Beres S.B."/>
            <person name="Campbell D.S."/>
            <person name="Smith T.M."/>
            <person name="Zhang Q."/>
            <person name="Kapur V."/>
            <person name="Daly J.A."/>
            <person name="Veasy L.G."/>
            <person name="Musser J.M."/>
        </authorList>
    </citation>
    <scope>NUCLEOTIDE SEQUENCE [LARGE SCALE GENOMIC DNA]</scope>
    <source>
        <strain>MGAS8232</strain>
    </source>
</reference>
<comment type="similarity">
    <text evidence="1">Belongs to the UPF0346 family.</text>
</comment>
<accession>Q7CNH7</accession>